<keyword id="KW-0119">Carbohydrate metabolism</keyword>
<keyword id="KW-0963">Cytoplasm</keyword>
<keyword id="KW-0903">Direct protein sequencing</keyword>
<keyword id="KW-0413">Isomerase</keyword>
<keyword id="KW-0460">Magnesium</keyword>
<keyword id="KW-0479">Metal-binding</keyword>
<keyword id="KW-0859">Xylose metabolism</keyword>
<comment type="catalytic activity">
    <reaction>
        <text>alpha-D-xylose = alpha-D-xylulofuranose</text>
        <dbReference type="Rhea" id="RHEA:22816"/>
        <dbReference type="ChEBI" id="CHEBI:28518"/>
        <dbReference type="ChEBI" id="CHEBI:188998"/>
        <dbReference type="EC" id="5.3.1.5"/>
    </reaction>
</comment>
<comment type="cofactor">
    <cofactor evidence="2">
        <name>Mg(2+)</name>
        <dbReference type="ChEBI" id="CHEBI:18420"/>
    </cofactor>
    <text evidence="2">Binds 2 magnesium ions per subunit.</text>
</comment>
<comment type="subunit">
    <text>Homotetramer.</text>
</comment>
<comment type="subcellular location">
    <subcellularLocation>
        <location>Cytoplasm</location>
    </subcellularLocation>
</comment>
<comment type="similarity">
    <text evidence="2">Belongs to the xylose isomerase family.</text>
</comment>
<accession>P14405</accession>
<gene>
    <name type="primary">xylA</name>
</gene>
<sequence>GVTFHDDDLIPF</sequence>
<protein>
    <recommendedName>
        <fullName>Xylose isomerase</fullName>
        <ecNumber>5.3.1.5</ecNumber>
    </recommendedName>
</protein>
<evidence type="ECO:0000250" key="1"/>
<evidence type="ECO:0000305" key="2"/>
<name>XYLA_STRVN</name>
<organism>
    <name type="scientific">Streptomyces violaceoruber</name>
    <dbReference type="NCBI Taxonomy" id="1935"/>
    <lineage>
        <taxon>Bacteria</taxon>
        <taxon>Bacillati</taxon>
        <taxon>Actinomycetota</taxon>
        <taxon>Actinomycetes</taxon>
        <taxon>Kitasatosporales</taxon>
        <taxon>Streptomycetaceae</taxon>
        <taxon>Streptomyces</taxon>
        <taxon>Streptomyces violaceoruber group</taxon>
    </lineage>
</organism>
<reference key="1">
    <citation type="journal article" date="1989" name="Biochem. J.">
        <title>Single active-site histidine in D-xylose isomerase from Streptomyces violaceoruber. Identification by chemical derivatization and peptide mapping.</title>
        <authorList>
            <person name="Vangrysperre W."/>
            <person name="Ampe C."/>
            <person name="Kersters-Hilderson H."/>
            <person name="Tempst P."/>
        </authorList>
    </citation>
    <scope>PROTEIN SEQUENCE</scope>
    <source>
        <strain>LMG 7183</strain>
    </source>
</reference>
<dbReference type="EC" id="5.3.1.5"/>
<dbReference type="SABIO-RK" id="P14405"/>
<dbReference type="GO" id="GO:0005737">
    <property type="term" value="C:cytoplasm"/>
    <property type="evidence" value="ECO:0007669"/>
    <property type="project" value="UniProtKB-SubCell"/>
</dbReference>
<dbReference type="GO" id="GO:0046872">
    <property type="term" value="F:metal ion binding"/>
    <property type="evidence" value="ECO:0007669"/>
    <property type="project" value="UniProtKB-KW"/>
</dbReference>
<dbReference type="GO" id="GO:0009045">
    <property type="term" value="F:xylose isomerase activity"/>
    <property type="evidence" value="ECO:0007669"/>
    <property type="project" value="UniProtKB-EC"/>
</dbReference>
<dbReference type="GO" id="GO:0042732">
    <property type="term" value="P:D-xylose metabolic process"/>
    <property type="evidence" value="ECO:0007669"/>
    <property type="project" value="UniProtKB-KW"/>
</dbReference>
<feature type="chain" id="PRO_0000195809" description="Xylose isomerase">
    <location>
        <begin position="1" status="less than"/>
        <end position="12" status="greater than"/>
    </location>
</feature>
<feature type="active site">
    <location>
        <position position="5"/>
    </location>
</feature>
<feature type="active site" evidence="1">
    <location>
        <position position="8"/>
    </location>
</feature>
<feature type="non-terminal residue">
    <location>
        <position position="1"/>
    </location>
</feature>
<feature type="non-terminal residue">
    <location>
        <position position="12"/>
    </location>
</feature>
<proteinExistence type="evidence at protein level"/>